<sequence>MTALPATSIAAPSLDDLDALNAHLETLRADERVAWALQHGPQQAALSSSFGAQSAVTLHLLTQQRPDIPVILIDTGYLFPETYRFADALTERLSLNLQVYRPLVSRAWMEARHGRLWEQGMVGIDQYNNLRKVEPMRRALDELNVGTWFTGLRRSQSGGRAQTPIVQKRGDRYKISPIADWTDRDVWQYLQAHALPYHPLWEQGYVSIGDFHTTRRWEPGMREEDTRFFGLKRECGIHEDI</sequence>
<protein>
    <recommendedName>
        <fullName evidence="1">Phosphoadenosine 5'-phosphosulfate reductase</fullName>
        <shortName evidence="1">PAPS reductase</shortName>
        <ecNumber evidence="1">1.8.4.8</ecNumber>
    </recommendedName>
    <alternativeName>
        <fullName evidence="1">3'-phosphoadenylylsulfate reductase</fullName>
    </alternativeName>
    <alternativeName>
        <fullName evidence="1">PAPS reductase, thioredoxin dependent</fullName>
    </alternativeName>
    <alternativeName>
        <fullName evidence="1">PAPS sulfotransferase</fullName>
    </alternativeName>
    <alternativeName>
        <fullName evidence="1">PAdoPS reductase</fullName>
    </alternativeName>
</protein>
<comment type="function">
    <text evidence="1">Catalyzes the formation of sulfite from phosphoadenosine 5'-phosphosulfate (PAPS) using thioredoxin as an electron donor.</text>
</comment>
<comment type="catalytic activity">
    <reaction evidence="1">
        <text>[thioredoxin]-disulfide + sulfite + adenosine 3',5'-bisphosphate + 2 H(+) = [thioredoxin]-dithiol + 3'-phosphoadenylyl sulfate</text>
        <dbReference type="Rhea" id="RHEA:11724"/>
        <dbReference type="Rhea" id="RHEA-COMP:10698"/>
        <dbReference type="Rhea" id="RHEA-COMP:10700"/>
        <dbReference type="ChEBI" id="CHEBI:15378"/>
        <dbReference type="ChEBI" id="CHEBI:17359"/>
        <dbReference type="ChEBI" id="CHEBI:29950"/>
        <dbReference type="ChEBI" id="CHEBI:50058"/>
        <dbReference type="ChEBI" id="CHEBI:58339"/>
        <dbReference type="ChEBI" id="CHEBI:58343"/>
        <dbReference type="EC" id="1.8.4.8"/>
    </reaction>
</comment>
<comment type="pathway">
    <text evidence="1">Sulfur metabolism; hydrogen sulfide biosynthesis; sulfite from sulfate: step 3/3.</text>
</comment>
<comment type="subcellular location">
    <subcellularLocation>
        <location evidence="1">Cytoplasm</location>
    </subcellularLocation>
</comment>
<comment type="similarity">
    <text evidence="1">Belongs to the PAPS reductase family. CysH subfamily.</text>
</comment>
<evidence type="ECO:0000255" key="1">
    <source>
        <dbReference type="HAMAP-Rule" id="MF_00063"/>
    </source>
</evidence>
<accession>Q8P607</accession>
<dbReference type="EC" id="1.8.4.8" evidence="1"/>
<dbReference type="EMBL" id="AE008922">
    <property type="protein sequence ID" value="AAM42445.1"/>
    <property type="molecule type" value="Genomic_DNA"/>
</dbReference>
<dbReference type="RefSeq" id="NP_638521.1">
    <property type="nucleotide sequence ID" value="NC_003902.1"/>
</dbReference>
<dbReference type="RefSeq" id="WP_011038282.1">
    <property type="nucleotide sequence ID" value="NC_003902.1"/>
</dbReference>
<dbReference type="SMR" id="Q8P607"/>
<dbReference type="STRING" id="190485.XCC3175"/>
<dbReference type="EnsemblBacteria" id="AAM42445">
    <property type="protein sequence ID" value="AAM42445"/>
    <property type="gene ID" value="XCC3175"/>
</dbReference>
<dbReference type="KEGG" id="xcc:XCC3175"/>
<dbReference type="PATRIC" id="fig|190485.4.peg.3391"/>
<dbReference type="eggNOG" id="COG0175">
    <property type="taxonomic scope" value="Bacteria"/>
</dbReference>
<dbReference type="HOGENOM" id="CLU_044089_3_0_6"/>
<dbReference type="OrthoDB" id="9794018at2"/>
<dbReference type="UniPathway" id="UPA00140">
    <property type="reaction ID" value="UER00206"/>
</dbReference>
<dbReference type="Proteomes" id="UP000001010">
    <property type="component" value="Chromosome"/>
</dbReference>
<dbReference type="GO" id="GO:0005737">
    <property type="term" value="C:cytoplasm"/>
    <property type="evidence" value="ECO:0007669"/>
    <property type="project" value="UniProtKB-SubCell"/>
</dbReference>
<dbReference type="GO" id="GO:0004604">
    <property type="term" value="F:phosphoadenylyl-sulfate reductase (thioredoxin) activity"/>
    <property type="evidence" value="ECO:0000318"/>
    <property type="project" value="GO_Central"/>
</dbReference>
<dbReference type="GO" id="GO:0070814">
    <property type="term" value="P:hydrogen sulfide biosynthetic process"/>
    <property type="evidence" value="ECO:0007669"/>
    <property type="project" value="UniProtKB-UniRule"/>
</dbReference>
<dbReference type="GO" id="GO:0019379">
    <property type="term" value="P:sulfate assimilation, phosphoadenylyl sulfate reduction by phosphoadenylyl-sulfate reductase (thioredoxin)"/>
    <property type="evidence" value="ECO:0000318"/>
    <property type="project" value="GO_Central"/>
</dbReference>
<dbReference type="CDD" id="cd23945">
    <property type="entry name" value="PAPS_reductase"/>
    <property type="match status" value="1"/>
</dbReference>
<dbReference type="FunFam" id="3.40.50.620:FF:000043">
    <property type="entry name" value="Phosphoadenosine phosphosulfate reductase"/>
    <property type="match status" value="1"/>
</dbReference>
<dbReference type="Gene3D" id="3.40.50.620">
    <property type="entry name" value="HUPs"/>
    <property type="match status" value="1"/>
</dbReference>
<dbReference type="HAMAP" id="MF_00063">
    <property type="entry name" value="CysH"/>
    <property type="match status" value="1"/>
</dbReference>
<dbReference type="InterPro" id="IPR004511">
    <property type="entry name" value="PAPS/APS_Rdtase"/>
</dbReference>
<dbReference type="InterPro" id="IPR002500">
    <property type="entry name" value="PAPS_reduct_dom"/>
</dbReference>
<dbReference type="InterPro" id="IPR011800">
    <property type="entry name" value="PAPS_reductase_CysH"/>
</dbReference>
<dbReference type="InterPro" id="IPR014729">
    <property type="entry name" value="Rossmann-like_a/b/a_fold"/>
</dbReference>
<dbReference type="NCBIfam" id="TIGR00434">
    <property type="entry name" value="cysH"/>
    <property type="match status" value="1"/>
</dbReference>
<dbReference type="NCBIfam" id="TIGR02057">
    <property type="entry name" value="PAPS_reductase"/>
    <property type="match status" value="1"/>
</dbReference>
<dbReference type="NCBIfam" id="NF002537">
    <property type="entry name" value="PRK02090.1"/>
    <property type="match status" value="1"/>
</dbReference>
<dbReference type="PANTHER" id="PTHR46509">
    <property type="entry name" value="PHOSPHOADENOSINE PHOSPHOSULFATE REDUCTASE"/>
    <property type="match status" value="1"/>
</dbReference>
<dbReference type="PANTHER" id="PTHR46509:SF1">
    <property type="entry name" value="PHOSPHOADENOSINE PHOSPHOSULFATE REDUCTASE"/>
    <property type="match status" value="1"/>
</dbReference>
<dbReference type="Pfam" id="PF01507">
    <property type="entry name" value="PAPS_reduct"/>
    <property type="match status" value="1"/>
</dbReference>
<dbReference type="PIRSF" id="PIRSF000857">
    <property type="entry name" value="PAPS_reductase"/>
    <property type="match status" value="1"/>
</dbReference>
<dbReference type="SUPFAM" id="SSF52402">
    <property type="entry name" value="Adenine nucleotide alpha hydrolases-like"/>
    <property type="match status" value="1"/>
</dbReference>
<gene>
    <name evidence="1" type="primary">cysH</name>
    <name type="ordered locus">XCC3175</name>
</gene>
<reference key="1">
    <citation type="journal article" date="2002" name="Nature">
        <title>Comparison of the genomes of two Xanthomonas pathogens with differing host specificities.</title>
        <authorList>
            <person name="da Silva A.C.R."/>
            <person name="Ferro J.A."/>
            <person name="Reinach F.C."/>
            <person name="Farah C.S."/>
            <person name="Furlan L.R."/>
            <person name="Quaggio R.B."/>
            <person name="Monteiro-Vitorello C.B."/>
            <person name="Van Sluys M.A."/>
            <person name="Almeida N.F. Jr."/>
            <person name="Alves L.M.C."/>
            <person name="do Amaral A.M."/>
            <person name="Bertolini M.C."/>
            <person name="Camargo L.E.A."/>
            <person name="Camarotte G."/>
            <person name="Cannavan F."/>
            <person name="Cardozo J."/>
            <person name="Chambergo F."/>
            <person name="Ciapina L.P."/>
            <person name="Cicarelli R.M.B."/>
            <person name="Coutinho L.L."/>
            <person name="Cursino-Santos J.R."/>
            <person name="El-Dorry H."/>
            <person name="Faria J.B."/>
            <person name="Ferreira A.J.S."/>
            <person name="Ferreira R.C.C."/>
            <person name="Ferro M.I.T."/>
            <person name="Formighieri E.F."/>
            <person name="Franco M.C."/>
            <person name="Greggio C.C."/>
            <person name="Gruber A."/>
            <person name="Katsuyama A.M."/>
            <person name="Kishi L.T."/>
            <person name="Leite R.P."/>
            <person name="Lemos E.G.M."/>
            <person name="Lemos M.V.F."/>
            <person name="Locali E.C."/>
            <person name="Machado M.A."/>
            <person name="Madeira A.M.B.N."/>
            <person name="Martinez-Rossi N.M."/>
            <person name="Martins E.C."/>
            <person name="Meidanis J."/>
            <person name="Menck C.F.M."/>
            <person name="Miyaki C.Y."/>
            <person name="Moon D.H."/>
            <person name="Moreira L.M."/>
            <person name="Novo M.T.M."/>
            <person name="Okura V.K."/>
            <person name="Oliveira M.C."/>
            <person name="Oliveira V.R."/>
            <person name="Pereira H.A."/>
            <person name="Rossi A."/>
            <person name="Sena J.A.D."/>
            <person name="Silva C."/>
            <person name="de Souza R.F."/>
            <person name="Spinola L.A.F."/>
            <person name="Takita M.A."/>
            <person name="Tamura R.E."/>
            <person name="Teixeira E.C."/>
            <person name="Tezza R.I.D."/>
            <person name="Trindade dos Santos M."/>
            <person name="Truffi D."/>
            <person name="Tsai S.M."/>
            <person name="White F.F."/>
            <person name="Setubal J.C."/>
            <person name="Kitajima J.P."/>
        </authorList>
    </citation>
    <scope>NUCLEOTIDE SEQUENCE [LARGE SCALE GENOMIC DNA]</scope>
    <source>
        <strain>ATCC 33913 / DSM 3586 / NCPPB 528 / LMG 568 / P 25</strain>
    </source>
</reference>
<feature type="chain" id="PRO_0000100657" description="Phosphoadenosine 5'-phosphosulfate reductase">
    <location>
        <begin position="1"/>
        <end position="241"/>
    </location>
</feature>
<feature type="active site" description="Nucleophile; cysteine thiosulfonate intermediate" evidence="1">
    <location>
        <position position="235"/>
    </location>
</feature>
<keyword id="KW-0963">Cytoplasm</keyword>
<keyword id="KW-0560">Oxidoreductase</keyword>
<keyword id="KW-1185">Reference proteome</keyword>
<name>CYSH_XANCP</name>
<organism>
    <name type="scientific">Xanthomonas campestris pv. campestris (strain ATCC 33913 / DSM 3586 / NCPPB 528 / LMG 568 / P 25)</name>
    <dbReference type="NCBI Taxonomy" id="190485"/>
    <lineage>
        <taxon>Bacteria</taxon>
        <taxon>Pseudomonadati</taxon>
        <taxon>Pseudomonadota</taxon>
        <taxon>Gammaproteobacteria</taxon>
        <taxon>Lysobacterales</taxon>
        <taxon>Lysobacteraceae</taxon>
        <taxon>Xanthomonas</taxon>
    </lineage>
</organism>
<proteinExistence type="inferred from homology"/>